<dbReference type="EC" id="1.1.1.284"/>
<dbReference type="EC" id="1.1.1.1"/>
<dbReference type="EC" id="1.1.1.-"/>
<dbReference type="EMBL" id="AE005174">
    <property type="protein sequence ID" value="AAG54707.1"/>
    <property type="molecule type" value="Genomic_DNA"/>
</dbReference>
<dbReference type="EMBL" id="BA000007">
    <property type="protein sequence ID" value="BAB33834.1"/>
    <property type="molecule type" value="Genomic_DNA"/>
</dbReference>
<dbReference type="PIR" id="C90680">
    <property type="entry name" value="C90680"/>
</dbReference>
<dbReference type="PIR" id="G85530">
    <property type="entry name" value="G85530"/>
</dbReference>
<dbReference type="RefSeq" id="NP_308438.1">
    <property type="nucleotide sequence ID" value="NC_002695.1"/>
</dbReference>
<dbReference type="RefSeq" id="WP_000842102.1">
    <property type="nucleotide sequence ID" value="NZ_VOAI01000005.1"/>
</dbReference>
<dbReference type="SMR" id="Q8X5J4"/>
<dbReference type="STRING" id="155864.Z0456"/>
<dbReference type="GeneID" id="914513"/>
<dbReference type="GeneID" id="93777099"/>
<dbReference type="KEGG" id="ece:Z0456"/>
<dbReference type="KEGG" id="ecs:ECs_0411"/>
<dbReference type="PATRIC" id="fig|386585.9.peg.506"/>
<dbReference type="eggNOG" id="COG1062">
    <property type="taxonomic scope" value="Bacteria"/>
</dbReference>
<dbReference type="HOGENOM" id="CLU_026673_14_0_6"/>
<dbReference type="OMA" id="IKGRSEM"/>
<dbReference type="Proteomes" id="UP000000558">
    <property type="component" value="Chromosome"/>
</dbReference>
<dbReference type="Proteomes" id="UP000002519">
    <property type="component" value="Chromosome"/>
</dbReference>
<dbReference type="GO" id="GO:0005829">
    <property type="term" value="C:cytosol"/>
    <property type="evidence" value="ECO:0007669"/>
    <property type="project" value="TreeGrafter"/>
</dbReference>
<dbReference type="GO" id="GO:0004022">
    <property type="term" value="F:alcohol dehydrogenase (NAD+) activity"/>
    <property type="evidence" value="ECO:0007669"/>
    <property type="project" value="UniProtKB-EC"/>
</dbReference>
<dbReference type="GO" id="GO:0106322">
    <property type="term" value="F:S-(hydroxymethyl)glutathione dehydrogenase (NAD+) activity"/>
    <property type="evidence" value="ECO:0007669"/>
    <property type="project" value="RHEA"/>
</dbReference>
<dbReference type="GO" id="GO:0106321">
    <property type="term" value="F:S-(hydroxymethyl)glutathione dehydrogenase (NADP+) activity"/>
    <property type="evidence" value="ECO:0007669"/>
    <property type="project" value="RHEA"/>
</dbReference>
<dbReference type="GO" id="GO:0080007">
    <property type="term" value="F:S-nitrosoglutathione reductase (NADH) activity"/>
    <property type="evidence" value="ECO:0007669"/>
    <property type="project" value="RHEA"/>
</dbReference>
<dbReference type="GO" id="GO:0008270">
    <property type="term" value="F:zinc ion binding"/>
    <property type="evidence" value="ECO:0007669"/>
    <property type="project" value="InterPro"/>
</dbReference>
<dbReference type="GO" id="GO:0046294">
    <property type="term" value="P:formaldehyde catabolic process"/>
    <property type="evidence" value="ECO:0007669"/>
    <property type="project" value="InterPro"/>
</dbReference>
<dbReference type="CDD" id="cd08300">
    <property type="entry name" value="alcohol_DH_class_III"/>
    <property type="match status" value="1"/>
</dbReference>
<dbReference type="FunFam" id="3.40.50.720:FF:000003">
    <property type="entry name" value="S-(hydroxymethyl)glutathione dehydrogenase"/>
    <property type="match status" value="1"/>
</dbReference>
<dbReference type="FunFam" id="3.90.180.10:FF:000001">
    <property type="entry name" value="S-(hydroxymethyl)glutathione dehydrogenase"/>
    <property type="match status" value="1"/>
</dbReference>
<dbReference type="Gene3D" id="3.90.180.10">
    <property type="entry name" value="Medium-chain alcohol dehydrogenases, catalytic domain"/>
    <property type="match status" value="1"/>
</dbReference>
<dbReference type="Gene3D" id="3.40.50.720">
    <property type="entry name" value="NAD(P)-binding Rossmann-like Domain"/>
    <property type="match status" value="1"/>
</dbReference>
<dbReference type="InterPro" id="IPR013149">
    <property type="entry name" value="ADH-like_C"/>
</dbReference>
<dbReference type="InterPro" id="IPR013154">
    <property type="entry name" value="ADH-like_N"/>
</dbReference>
<dbReference type="InterPro" id="IPR014183">
    <property type="entry name" value="ADH_3"/>
</dbReference>
<dbReference type="InterPro" id="IPR002328">
    <property type="entry name" value="ADH_Zn_CS"/>
</dbReference>
<dbReference type="InterPro" id="IPR011032">
    <property type="entry name" value="GroES-like_sf"/>
</dbReference>
<dbReference type="InterPro" id="IPR036291">
    <property type="entry name" value="NAD(P)-bd_dom_sf"/>
</dbReference>
<dbReference type="InterPro" id="IPR020843">
    <property type="entry name" value="PKS_ER"/>
</dbReference>
<dbReference type="NCBIfam" id="TIGR02818">
    <property type="entry name" value="adh_III_F_hyde"/>
    <property type="match status" value="1"/>
</dbReference>
<dbReference type="PANTHER" id="PTHR43880">
    <property type="entry name" value="ALCOHOL DEHYDROGENASE"/>
    <property type="match status" value="1"/>
</dbReference>
<dbReference type="PANTHER" id="PTHR43880:SF12">
    <property type="entry name" value="ALCOHOL DEHYDROGENASE CLASS-3"/>
    <property type="match status" value="1"/>
</dbReference>
<dbReference type="Pfam" id="PF08240">
    <property type="entry name" value="ADH_N"/>
    <property type="match status" value="1"/>
</dbReference>
<dbReference type="Pfam" id="PF00107">
    <property type="entry name" value="ADH_zinc_N"/>
    <property type="match status" value="1"/>
</dbReference>
<dbReference type="SMART" id="SM00829">
    <property type="entry name" value="PKS_ER"/>
    <property type="match status" value="1"/>
</dbReference>
<dbReference type="SUPFAM" id="SSF50129">
    <property type="entry name" value="GroES-like"/>
    <property type="match status" value="2"/>
</dbReference>
<dbReference type="SUPFAM" id="SSF51735">
    <property type="entry name" value="NAD(P)-binding Rossmann-fold domains"/>
    <property type="match status" value="1"/>
</dbReference>
<dbReference type="PROSITE" id="PS00059">
    <property type="entry name" value="ADH_ZINC"/>
    <property type="match status" value="1"/>
</dbReference>
<organism>
    <name type="scientific">Escherichia coli O157:H7</name>
    <dbReference type="NCBI Taxonomy" id="83334"/>
    <lineage>
        <taxon>Bacteria</taxon>
        <taxon>Pseudomonadati</taxon>
        <taxon>Pseudomonadota</taxon>
        <taxon>Gammaproteobacteria</taxon>
        <taxon>Enterobacterales</taxon>
        <taxon>Enterobacteriaceae</taxon>
        <taxon>Escherichia</taxon>
    </lineage>
</organism>
<feature type="chain" id="PRO_0000341287" description="S-(hydroxymethyl)glutathione dehydrogenase">
    <location>
        <begin position="1"/>
        <end position="369"/>
    </location>
</feature>
<feature type="binding site" evidence="1">
    <location>
        <position position="40"/>
    </location>
    <ligand>
        <name>Zn(2+)</name>
        <dbReference type="ChEBI" id="CHEBI:29105"/>
        <label>1</label>
        <note>catalytic</note>
    </ligand>
</feature>
<feature type="binding site" evidence="1">
    <location>
        <position position="62"/>
    </location>
    <ligand>
        <name>Zn(2+)</name>
        <dbReference type="ChEBI" id="CHEBI:29105"/>
        <label>1</label>
        <note>catalytic</note>
    </ligand>
</feature>
<feature type="binding site" evidence="1">
    <location>
        <position position="92"/>
    </location>
    <ligand>
        <name>Zn(2+)</name>
        <dbReference type="ChEBI" id="CHEBI:29105"/>
        <label>2</label>
    </ligand>
</feature>
<feature type="binding site" evidence="1">
    <location>
        <position position="95"/>
    </location>
    <ligand>
        <name>Zn(2+)</name>
        <dbReference type="ChEBI" id="CHEBI:29105"/>
        <label>2</label>
    </ligand>
</feature>
<feature type="binding site" evidence="1">
    <location>
        <position position="98"/>
    </location>
    <ligand>
        <name>Zn(2+)</name>
        <dbReference type="ChEBI" id="CHEBI:29105"/>
        <label>2</label>
    </ligand>
</feature>
<feature type="binding site" evidence="1">
    <location>
        <position position="106"/>
    </location>
    <ligand>
        <name>Zn(2+)</name>
        <dbReference type="ChEBI" id="CHEBI:29105"/>
        <label>2</label>
    </ligand>
</feature>
<feature type="binding site" evidence="1">
    <location>
        <position position="169"/>
    </location>
    <ligand>
        <name>Zn(2+)</name>
        <dbReference type="ChEBI" id="CHEBI:29105"/>
        <label>1</label>
        <note>catalytic</note>
    </ligand>
</feature>
<protein>
    <recommendedName>
        <fullName>S-(hydroxymethyl)glutathione dehydrogenase</fullName>
        <ecNumber>1.1.1.284</ecNumber>
    </recommendedName>
    <alternativeName>
        <fullName>Alcohol dehydrogenase class-3</fullName>
        <ecNumber>1.1.1.1</ecNumber>
    </alternativeName>
    <alternativeName>
        <fullName>Alcohol dehydrogenase class-III</fullName>
    </alternativeName>
    <alternativeName>
        <fullName>Glutathione-dependent formaldehyde dehydrogenase</fullName>
        <shortName>FALDH</shortName>
        <shortName>FDH</shortName>
        <shortName>GSH-FDH</shortName>
        <ecNumber>1.1.1.-</ecNumber>
    </alternativeName>
</protein>
<proteinExistence type="inferred from homology"/>
<comment type="function">
    <text evidence="2">Has high formaldehyde dehydrogenase activity in the presence of glutathione and catalyzes the oxidation of normal alcohols in a reaction that is not GSH-dependent. In addition, hemithiolacetals other than those formed from GSH, including omega-thiol fatty acids, also are substrates. Also acts as a S-nitroso-glutathione reductase by catalyzing the NADH-dependent reduction of S-nitrosoglutathione.</text>
</comment>
<comment type="catalytic activity">
    <reaction evidence="2">
        <text>S-(hydroxymethyl)glutathione + NADP(+) = S-formylglutathione + NADPH + H(+)</text>
        <dbReference type="Rhea" id="RHEA:19981"/>
        <dbReference type="ChEBI" id="CHEBI:15378"/>
        <dbReference type="ChEBI" id="CHEBI:57688"/>
        <dbReference type="ChEBI" id="CHEBI:57783"/>
        <dbReference type="ChEBI" id="CHEBI:58349"/>
        <dbReference type="ChEBI" id="CHEBI:58758"/>
        <dbReference type="EC" id="1.1.1.284"/>
    </reaction>
</comment>
<comment type="catalytic activity">
    <reaction evidence="2">
        <text>S-(hydroxymethyl)glutathione + NAD(+) = S-formylglutathione + NADH + H(+)</text>
        <dbReference type="Rhea" id="RHEA:19985"/>
        <dbReference type="ChEBI" id="CHEBI:15378"/>
        <dbReference type="ChEBI" id="CHEBI:57540"/>
        <dbReference type="ChEBI" id="CHEBI:57688"/>
        <dbReference type="ChEBI" id="CHEBI:57945"/>
        <dbReference type="ChEBI" id="CHEBI:58758"/>
        <dbReference type="EC" id="1.1.1.284"/>
    </reaction>
</comment>
<comment type="catalytic activity">
    <reaction evidence="2">
        <text>a primary alcohol + NAD(+) = an aldehyde + NADH + H(+)</text>
        <dbReference type="Rhea" id="RHEA:10736"/>
        <dbReference type="ChEBI" id="CHEBI:15378"/>
        <dbReference type="ChEBI" id="CHEBI:15734"/>
        <dbReference type="ChEBI" id="CHEBI:17478"/>
        <dbReference type="ChEBI" id="CHEBI:57540"/>
        <dbReference type="ChEBI" id="CHEBI:57945"/>
        <dbReference type="EC" id="1.1.1.1"/>
    </reaction>
</comment>
<comment type="catalytic activity">
    <reaction evidence="2">
        <text>a secondary alcohol + NAD(+) = a ketone + NADH + H(+)</text>
        <dbReference type="Rhea" id="RHEA:10740"/>
        <dbReference type="ChEBI" id="CHEBI:15378"/>
        <dbReference type="ChEBI" id="CHEBI:17087"/>
        <dbReference type="ChEBI" id="CHEBI:35681"/>
        <dbReference type="ChEBI" id="CHEBI:57540"/>
        <dbReference type="ChEBI" id="CHEBI:57945"/>
        <dbReference type="EC" id="1.1.1.1"/>
    </reaction>
</comment>
<comment type="catalytic activity">
    <reaction evidence="2">
        <text>S-nitrosoglutathione + NADH + H(+) = S-(hydroxysulfenamide)glutathione + NAD(+)</text>
        <dbReference type="Rhea" id="RHEA:78371"/>
        <dbReference type="ChEBI" id="CHEBI:15378"/>
        <dbReference type="ChEBI" id="CHEBI:57540"/>
        <dbReference type="ChEBI" id="CHEBI:57945"/>
        <dbReference type="ChEBI" id="CHEBI:145544"/>
        <dbReference type="ChEBI" id="CHEBI:229723"/>
    </reaction>
    <physiologicalReaction direction="left-to-right" evidence="2">
        <dbReference type="Rhea" id="RHEA:78372"/>
    </physiologicalReaction>
</comment>
<comment type="cofactor">
    <cofactor evidence="1">
        <name>Zn(2+)</name>
        <dbReference type="ChEBI" id="CHEBI:29105"/>
    </cofactor>
    <text evidence="1">Binds 2 Zn(2+) ions per subunit.</text>
</comment>
<comment type="subunit">
    <text evidence="2">Homodimer.</text>
</comment>
<comment type="subcellular location">
    <subcellularLocation>
        <location evidence="2">Cytoplasm</location>
    </subcellularLocation>
</comment>
<comment type="similarity">
    <text evidence="3">Belongs to the zinc-containing alcohol dehydrogenase family. Class-III subfamily.</text>
</comment>
<name>FRMA_ECO57</name>
<keyword id="KW-0963">Cytoplasm</keyword>
<keyword id="KW-0479">Metal-binding</keyword>
<keyword id="KW-0520">NAD</keyword>
<keyword id="KW-0560">Oxidoreductase</keyword>
<keyword id="KW-1185">Reference proteome</keyword>
<keyword id="KW-0862">Zinc</keyword>
<sequence length="369" mass="39333">MKSRAAVAFAPGKPLEIVEIDVAPPKKGEVLIKVTHTGVCHTDAFTLSGDDPEGVFPVVLGHEGAGVVVEVGEGVTSVKPGDHVIPLYTAECGECEFCRSGKTNLCVAVRETQGKGLMPDGTTRFSYNGQPLYHYMGCSTFSEYTVVAEVSLAKINPEANHEHVCLLGCGVTTGIGAVHNTAKVQPGDSVAVFGLGAIGLAVVQGARQAKAGRIIAIDTNPKKFDLARRFGATDCINPNDYDKPIKDVLLDINKWGIDHTFECIGNVNVMRAALESAHRGWGQSVIIGVAGSGQEISTRPFQLVTGRVWKGSAFGGVKGRSQLPGMVEDAMKGDIDLEPFVTHTMSLDEINDAFDLMHEGKSIRTVIRY</sequence>
<gene>
    <name type="primary">frmA</name>
    <name type="ordered locus">Z0456</name>
    <name type="ordered locus">ECs0411</name>
</gene>
<evidence type="ECO:0000250" key="1">
    <source>
        <dbReference type="UniProtKB" id="P11766"/>
    </source>
</evidence>
<evidence type="ECO:0000250" key="2">
    <source>
        <dbReference type="UniProtKB" id="P25437"/>
    </source>
</evidence>
<evidence type="ECO:0000305" key="3"/>
<reference key="1">
    <citation type="journal article" date="2001" name="Nature">
        <title>Genome sequence of enterohaemorrhagic Escherichia coli O157:H7.</title>
        <authorList>
            <person name="Perna N.T."/>
            <person name="Plunkett G. III"/>
            <person name="Burland V."/>
            <person name="Mau B."/>
            <person name="Glasner J.D."/>
            <person name="Rose D.J."/>
            <person name="Mayhew G.F."/>
            <person name="Evans P.S."/>
            <person name="Gregor J."/>
            <person name="Kirkpatrick H.A."/>
            <person name="Posfai G."/>
            <person name="Hackett J."/>
            <person name="Klink S."/>
            <person name="Boutin A."/>
            <person name="Shao Y."/>
            <person name="Miller L."/>
            <person name="Grotbeck E.J."/>
            <person name="Davis N.W."/>
            <person name="Lim A."/>
            <person name="Dimalanta E.T."/>
            <person name="Potamousis K."/>
            <person name="Apodaca J."/>
            <person name="Anantharaman T.S."/>
            <person name="Lin J."/>
            <person name="Yen G."/>
            <person name="Schwartz D.C."/>
            <person name="Welch R.A."/>
            <person name="Blattner F.R."/>
        </authorList>
    </citation>
    <scope>NUCLEOTIDE SEQUENCE [LARGE SCALE GENOMIC DNA]</scope>
    <source>
        <strain>O157:H7 / EDL933 / ATCC 700927 / EHEC</strain>
    </source>
</reference>
<reference key="2">
    <citation type="journal article" date="2001" name="DNA Res.">
        <title>Complete genome sequence of enterohemorrhagic Escherichia coli O157:H7 and genomic comparison with a laboratory strain K-12.</title>
        <authorList>
            <person name="Hayashi T."/>
            <person name="Makino K."/>
            <person name="Ohnishi M."/>
            <person name="Kurokawa K."/>
            <person name="Ishii K."/>
            <person name="Yokoyama K."/>
            <person name="Han C.-G."/>
            <person name="Ohtsubo E."/>
            <person name="Nakayama K."/>
            <person name="Murata T."/>
            <person name="Tanaka M."/>
            <person name="Tobe T."/>
            <person name="Iida T."/>
            <person name="Takami H."/>
            <person name="Honda T."/>
            <person name="Sasakawa C."/>
            <person name="Ogasawara N."/>
            <person name="Yasunaga T."/>
            <person name="Kuhara S."/>
            <person name="Shiba T."/>
            <person name="Hattori M."/>
            <person name="Shinagawa H."/>
        </authorList>
    </citation>
    <scope>NUCLEOTIDE SEQUENCE [LARGE SCALE GENOMIC DNA]</scope>
    <source>
        <strain>O157:H7 / Sakai / RIMD 0509952 / EHEC</strain>
    </source>
</reference>
<accession>Q8X5J4</accession>
<accession>Q7AH45</accession>